<reference key="1">
    <citation type="journal article" date="2005" name="Proc. Natl. Acad. Sci. U.S.A.">
        <title>The psychrophilic lifestyle as revealed by the genome sequence of Colwellia psychrerythraea 34H through genomic and proteomic analyses.</title>
        <authorList>
            <person name="Methe B.A."/>
            <person name="Nelson K.E."/>
            <person name="Deming J.W."/>
            <person name="Momen B."/>
            <person name="Melamud E."/>
            <person name="Zhang X."/>
            <person name="Moult J."/>
            <person name="Madupu R."/>
            <person name="Nelson W.C."/>
            <person name="Dodson R.J."/>
            <person name="Brinkac L.M."/>
            <person name="Daugherty S.C."/>
            <person name="Durkin A.S."/>
            <person name="DeBoy R.T."/>
            <person name="Kolonay J.F."/>
            <person name="Sullivan S.A."/>
            <person name="Zhou L."/>
            <person name="Davidsen T.M."/>
            <person name="Wu M."/>
            <person name="Huston A.L."/>
            <person name="Lewis M."/>
            <person name="Weaver B."/>
            <person name="Weidman J.F."/>
            <person name="Khouri H."/>
            <person name="Utterback T.R."/>
            <person name="Feldblyum T.V."/>
            <person name="Fraser C.M."/>
        </authorList>
    </citation>
    <scope>NUCLEOTIDE SEQUENCE [LARGE SCALE GENOMIC DNA]</scope>
    <source>
        <strain>34H / ATCC BAA-681</strain>
    </source>
</reference>
<comment type="function">
    <text evidence="1">Specifically methylates the uridine in position 2552 of 23S rRNA at the 2'-O position of the ribose in the fully assembled 50S ribosomal subunit.</text>
</comment>
<comment type="catalytic activity">
    <reaction evidence="1">
        <text>uridine(2552) in 23S rRNA + S-adenosyl-L-methionine = 2'-O-methyluridine(2552) in 23S rRNA + S-adenosyl-L-homocysteine + H(+)</text>
        <dbReference type="Rhea" id="RHEA:42720"/>
        <dbReference type="Rhea" id="RHEA-COMP:10202"/>
        <dbReference type="Rhea" id="RHEA-COMP:10203"/>
        <dbReference type="ChEBI" id="CHEBI:15378"/>
        <dbReference type="ChEBI" id="CHEBI:57856"/>
        <dbReference type="ChEBI" id="CHEBI:59789"/>
        <dbReference type="ChEBI" id="CHEBI:65315"/>
        <dbReference type="ChEBI" id="CHEBI:74478"/>
        <dbReference type="EC" id="2.1.1.166"/>
    </reaction>
</comment>
<comment type="subcellular location">
    <subcellularLocation>
        <location evidence="1">Cytoplasm</location>
    </subcellularLocation>
</comment>
<comment type="similarity">
    <text evidence="1">Belongs to the class I-like SAM-binding methyltransferase superfamily. RNA methyltransferase RlmE family.</text>
</comment>
<dbReference type="EC" id="2.1.1.166" evidence="1"/>
<dbReference type="EMBL" id="CP000083">
    <property type="protein sequence ID" value="AAZ25977.1"/>
    <property type="molecule type" value="Genomic_DNA"/>
</dbReference>
<dbReference type="RefSeq" id="WP_011044213.1">
    <property type="nucleotide sequence ID" value="NC_003910.7"/>
</dbReference>
<dbReference type="SMR" id="Q47YJ3"/>
<dbReference type="STRING" id="167879.CPS_3453"/>
<dbReference type="KEGG" id="cps:CPS_3453"/>
<dbReference type="eggNOG" id="COG0293">
    <property type="taxonomic scope" value="Bacteria"/>
</dbReference>
<dbReference type="HOGENOM" id="CLU_009422_4_0_6"/>
<dbReference type="Proteomes" id="UP000000547">
    <property type="component" value="Chromosome"/>
</dbReference>
<dbReference type="GO" id="GO:0005737">
    <property type="term" value="C:cytoplasm"/>
    <property type="evidence" value="ECO:0007669"/>
    <property type="project" value="UniProtKB-SubCell"/>
</dbReference>
<dbReference type="GO" id="GO:0008650">
    <property type="term" value="F:rRNA (uridine-2'-O-)-methyltransferase activity"/>
    <property type="evidence" value="ECO:0007669"/>
    <property type="project" value="UniProtKB-UniRule"/>
</dbReference>
<dbReference type="CDD" id="cd02440">
    <property type="entry name" value="AdoMet_MTases"/>
    <property type="match status" value="1"/>
</dbReference>
<dbReference type="FunFam" id="3.40.50.150:FF:000005">
    <property type="entry name" value="Ribosomal RNA large subunit methyltransferase E"/>
    <property type="match status" value="1"/>
</dbReference>
<dbReference type="Gene3D" id="3.40.50.150">
    <property type="entry name" value="Vaccinia Virus protein VP39"/>
    <property type="match status" value="1"/>
</dbReference>
<dbReference type="HAMAP" id="MF_01547">
    <property type="entry name" value="RNA_methyltr_E"/>
    <property type="match status" value="1"/>
</dbReference>
<dbReference type="InterPro" id="IPR050082">
    <property type="entry name" value="RNA_methyltr_RlmE"/>
</dbReference>
<dbReference type="InterPro" id="IPR002877">
    <property type="entry name" value="RNA_MeTrfase_FtsJ_dom"/>
</dbReference>
<dbReference type="InterPro" id="IPR015507">
    <property type="entry name" value="rRNA-MeTfrase_E"/>
</dbReference>
<dbReference type="InterPro" id="IPR029063">
    <property type="entry name" value="SAM-dependent_MTases_sf"/>
</dbReference>
<dbReference type="NCBIfam" id="NF008390">
    <property type="entry name" value="PRK11188.1"/>
    <property type="match status" value="1"/>
</dbReference>
<dbReference type="PANTHER" id="PTHR10920">
    <property type="entry name" value="RIBOSOMAL RNA METHYLTRANSFERASE"/>
    <property type="match status" value="1"/>
</dbReference>
<dbReference type="PANTHER" id="PTHR10920:SF18">
    <property type="entry name" value="RRNA METHYLTRANSFERASE 2, MITOCHONDRIAL"/>
    <property type="match status" value="1"/>
</dbReference>
<dbReference type="Pfam" id="PF01728">
    <property type="entry name" value="FtsJ"/>
    <property type="match status" value="1"/>
</dbReference>
<dbReference type="PIRSF" id="PIRSF005461">
    <property type="entry name" value="23S_rRNA_mtase"/>
    <property type="match status" value="1"/>
</dbReference>
<dbReference type="SUPFAM" id="SSF53335">
    <property type="entry name" value="S-adenosyl-L-methionine-dependent methyltransferases"/>
    <property type="match status" value="1"/>
</dbReference>
<organism>
    <name type="scientific">Colwellia psychrerythraea (strain 34H / ATCC BAA-681)</name>
    <name type="common">Vibrio psychroerythus</name>
    <dbReference type="NCBI Taxonomy" id="167879"/>
    <lineage>
        <taxon>Bacteria</taxon>
        <taxon>Pseudomonadati</taxon>
        <taxon>Pseudomonadota</taxon>
        <taxon>Gammaproteobacteria</taxon>
        <taxon>Alteromonadales</taxon>
        <taxon>Colwelliaceae</taxon>
        <taxon>Colwellia</taxon>
    </lineage>
</organism>
<sequence>MANKKHKASSQRWLDEHFDDEYVKKAQRLGLRSRAVFKLEEINIKDRLIKPGMKVVDLGAAPGGWSEYAVKVVGDKGQVVACDILPMDAIVGVDFLEGDFREEEVLDALLTRINGKNIDVVMSDMAANMTGNESADSARSMYLVELALDMCSQVLKPNGAFVVKVFQGAGFEDYMKATRAVFKAVKTRKPESSRARSREVYLVATGYKG</sequence>
<accession>Q47YJ3</accession>
<name>RLME_COLP3</name>
<evidence type="ECO:0000255" key="1">
    <source>
        <dbReference type="HAMAP-Rule" id="MF_01547"/>
    </source>
</evidence>
<feature type="chain" id="PRO_0000155488" description="Ribosomal RNA large subunit methyltransferase E">
    <location>
        <begin position="1"/>
        <end position="209"/>
    </location>
</feature>
<feature type="active site" description="Proton acceptor" evidence="1">
    <location>
        <position position="164"/>
    </location>
</feature>
<feature type="binding site" evidence="1">
    <location>
        <position position="63"/>
    </location>
    <ligand>
        <name>S-adenosyl-L-methionine</name>
        <dbReference type="ChEBI" id="CHEBI:59789"/>
    </ligand>
</feature>
<feature type="binding site" evidence="1">
    <location>
        <position position="65"/>
    </location>
    <ligand>
        <name>S-adenosyl-L-methionine</name>
        <dbReference type="ChEBI" id="CHEBI:59789"/>
    </ligand>
</feature>
<feature type="binding site" evidence="1">
    <location>
        <position position="83"/>
    </location>
    <ligand>
        <name>S-adenosyl-L-methionine</name>
        <dbReference type="ChEBI" id="CHEBI:59789"/>
    </ligand>
</feature>
<feature type="binding site" evidence="1">
    <location>
        <position position="99"/>
    </location>
    <ligand>
        <name>S-adenosyl-L-methionine</name>
        <dbReference type="ChEBI" id="CHEBI:59789"/>
    </ligand>
</feature>
<feature type="binding site" evidence="1">
    <location>
        <position position="124"/>
    </location>
    <ligand>
        <name>S-adenosyl-L-methionine</name>
        <dbReference type="ChEBI" id="CHEBI:59789"/>
    </ligand>
</feature>
<keyword id="KW-0963">Cytoplasm</keyword>
<keyword id="KW-0489">Methyltransferase</keyword>
<keyword id="KW-0698">rRNA processing</keyword>
<keyword id="KW-0949">S-adenosyl-L-methionine</keyword>
<keyword id="KW-0808">Transferase</keyword>
<proteinExistence type="inferred from homology"/>
<protein>
    <recommendedName>
        <fullName evidence="1">Ribosomal RNA large subunit methyltransferase E</fullName>
        <ecNumber evidence="1">2.1.1.166</ecNumber>
    </recommendedName>
    <alternativeName>
        <fullName evidence="1">23S rRNA Um2552 methyltransferase</fullName>
    </alternativeName>
    <alternativeName>
        <fullName evidence="1">rRNA (uridine-2'-O-)-methyltransferase</fullName>
    </alternativeName>
</protein>
<gene>
    <name evidence="1" type="primary">rlmE</name>
    <name evidence="1" type="synonym">ftsJ</name>
    <name evidence="1" type="synonym">rrmJ</name>
    <name type="ordered locus">CPS_3453</name>
</gene>